<keyword id="KW-0665">Pyrimidine biosynthesis</keyword>
<keyword id="KW-1185">Reference proteome</keyword>
<keyword id="KW-0808">Transferase</keyword>
<feature type="chain" id="PRO_1000201607" description="Aspartate carbamoyltransferase catalytic subunit">
    <location>
        <begin position="1"/>
        <end position="308"/>
    </location>
</feature>
<feature type="binding site" evidence="1">
    <location>
        <position position="57"/>
    </location>
    <ligand>
        <name>carbamoyl phosphate</name>
        <dbReference type="ChEBI" id="CHEBI:58228"/>
    </ligand>
</feature>
<feature type="binding site" evidence="1">
    <location>
        <position position="58"/>
    </location>
    <ligand>
        <name>carbamoyl phosphate</name>
        <dbReference type="ChEBI" id="CHEBI:58228"/>
    </ligand>
</feature>
<feature type="binding site" evidence="1">
    <location>
        <position position="86"/>
    </location>
    <ligand>
        <name>L-aspartate</name>
        <dbReference type="ChEBI" id="CHEBI:29991"/>
    </ligand>
</feature>
<feature type="binding site" evidence="1">
    <location>
        <position position="107"/>
    </location>
    <ligand>
        <name>carbamoyl phosphate</name>
        <dbReference type="ChEBI" id="CHEBI:58228"/>
    </ligand>
</feature>
<feature type="binding site" evidence="1">
    <location>
        <position position="135"/>
    </location>
    <ligand>
        <name>carbamoyl phosphate</name>
        <dbReference type="ChEBI" id="CHEBI:58228"/>
    </ligand>
</feature>
<feature type="binding site" evidence="1">
    <location>
        <position position="138"/>
    </location>
    <ligand>
        <name>carbamoyl phosphate</name>
        <dbReference type="ChEBI" id="CHEBI:58228"/>
    </ligand>
</feature>
<feature type="binding site" evidence="1">
    <location>
        <position position="168"/>
    </location>
    <ligand>
        <name>L-aspartate</name>
        <dbReference type="ChEBI" id="CHEBI:29991"/>
    </ligand>
</feature>
<feature type="binding site" evidence="1">
    <location>
        <position position="229"/>
    </location>
    <ligand>
        <name>L-aspartate</name>
        <dbReference type="ChEBI" id="CHEBI:29991"/>
    </ligand>
</feature>
<feature type="binding site" evidence="1">
    <location>
        <position position="268"/>
    </location>
    <ligand>
        <name>carbamoyl phosphate</name>
        <dbReference type="ChEBI" id="CHEBI:58228"/>
    </ligand>
</feature>
<feature type="binding site" evidence="1">
    <location>
        <position position="269"/>
    </location>
    <ligand>
        <name>carbamoyl phosphate</name>
        <dbReference type="ChEBI" id="CHEBI:58228"/>
    </ligand>
</feature>
<evidence type="ECO:0000255" key="1">
    <source>
        <dbReference type="HAMAP-Rule" id="MF_00001"/>
    </source>
</evidence>
<gene>
    <name evidence="1" type="primary">pyrB</name>
    <name type="ordered locus">TGAM_2088</name>
</gene>
<dbReference type="EC" id="2.1.3.2" evidence="1"/>
<dbReference type="EMBL" id="CP001398">
    <property type="protein sequence ID" value="ACS34590.1"/>
    <property type="molecule type" value="Genomic_DNA"/>
</dbReference>
<dbReference type="RefSeq" id="WP_015859693.1">
    <property type="nucleotide sequence ID" value="NC_012804.1"/>
</dbReference>
<dbReference type="SMR" id="C5A2H1"/>
<dbReference type="STRING" id="593117.TGAM_2088"/>
<dbReference type="PaxDb" id="593117-TGAM_2088"/>
<dbReference type="GeneID" id="7988654"/>
<dbReference type="KEGG" id="tga:TGAM_2088"/>
<dbReference type="PATRIC" id="fig|593117.10.peg.2096"/>
<dbReference type="eggNOG" id="arCOG00911">
    <property type="taxonomic scope" value="Archaea"/>
</dbReference>
<dbReference type="HOGENOM" id="CLU_043846_1_2_2"/>
<dbReference type="OrthoDB" id="7792at2157"/>
<dbReference type="UniPathway" id="UPA00070">
    <property type="reaction ID" value="UER00116"/>
</dbReference>
<dbReference type="Proteomes" id="UP000001488">
    <property type="component" value="Chromosome"/>
</dbReference>
<dbReference type="GO" id="GO:0016597">
    <property type="term" value="F:amino acid binding"/>
    <property type="evidence" value="ECO:0007669"/>
    <property type="project" value="InterPro"/>
</dbReference>
<dbReference type="GO" id="GO:0004070">
    <property type="term" value="F:aspartate carbamoyltransferase activity"/>
    <property type="evidence" value="ECO:0007669"/>
    <property type="project" value="UniProtKB-UniRule"/>
</dbReference>
<dbReference type="GO" id="GO:0006207">
    <property type="term" value="P:'de novo' pyrimidine nucleobase biosynthetic process"/>
    <property type="evidence" value="ECO:0007669"/>
    <property type="project" value="InterPro"/>
</dbReference>
<dbReference type="GO" id="GO:0044205">
    <property type="term" value="P:'de novo' UMP biosynthetic process"/>
    <property type="evidence" value="ECO:0007669"/>
    <property type="project" value="UniProtKB-UniRule"/>
</dbReference>
<dbReference type="GO" id="GO:0006520">
    <property type="term" value="P:amino acid metabolic process"/>
    <property type="evidence" value="ECO:0007669"/>
    <property type="project" value="InterPro"/>
</dbReference>
<dbReference type="FunFam" id="3.40.50.1370:FF:000001">
    <property type="entry name" value="Aspartate carbamoyltransferase"/>
    <property type="match status" value="1"/>
</dbReference>
<dbReference type="FunFam" id="3.40.50.1370:FF:000021">
    <property type="entry name" value="Aspartate carbamoyltransferase"/>
    <property type="match status" value="1"/>
</dbReference>
<dbReference type="Gene3D" id="3.40.50.1370">
    <property type="entry name" value="Aspartate/ornithine carbamoyltransferase"/>
    <property type="match status" value="2"/>
</dbReference>
<dbReference type="HAMAP" id="MF_00001">
    <property type="entry name" value="Asp_carb_tr"/>
    <property type="match status" value="1"/>
</dbReference>
<dbReference type="InterPro" id="IPR006132">
    <property type="entry name" value="Asp/Orn_carbamoyltranf_P-bd"/>
</dbReference>
<dbReference type="InterPro" id="IPR006130">
    <property type="entry name" value="Asp/Orn_carbamoylTrfase"/>
</dbReference>
<dbReference type="InterPro" id="IPR036901">
    <property type="entry name" value="Asp/Orn_carbamoylTrfase_sf"/>
</dbReference>
<dbReference type="InterPro" id="IPR002082">
    <property type="entry name" value="Asp_carbamoyltransf"/>
</dbReference>
<dbReference type="InterPro" id="IPR006131">
    <property type="entry name" value="Asp_carbamoyltransf_Asp/Orn-bd"/>
</dbReference>
<dbReference type="NCBIfam" id="TIGR00670">
    <property type="entry name" value="asp_carb_tr"/>
    <property type="match status" value="1"/>
</dbReference>
<dbReference type="NCBIfam" id="NF002032">
    <property type="entry name" value="PRK00856.1"/>
    <property type="match status" value="1"/>
</dbReference>
<dbReference type="PANTHER" id="PTHR45753:SF6">
    <property type="entry name" value="ASPARTATE CARBAMOYLTRANSFERASE"/>
    <property type="match status" value="1"/>
</dbReference>
<dbReference type="PANTHER" id="PTHR45753">
    <property type="entry name" value="ORNITHINE CARBAMOYLTRANSFERASE, MITOCHONDRIAL"/>
    <property type="match status" value="1"/>
</dbReference>
<dbReference type="Pfam" id="PF00185">
    <property type="entry name" value="OTCace"/>
    <property type="match status" value="1"/>
</dbReference>
<dbReference type="Pfam" id="PF02729">
    <property type="entry name" value="OTCace_N"/>
    <property type="match status" value="1"/>
</dbReference>
<dbReference type="PRINTS" id="PR00100">
    <property type="entry name" value="AOTCASE"/>
</dbReference>
<dbReference type="PRINTS" id="PR00101">
    <property type="entry name" value="ATCASE"/>
</dbReference>
<dbReference type="SUPFAM" id="SSF53671">
    <property type="entry name" value="Aspartate/ornithine carbamoyltransferase"/>
    <property type="match status" value="1"/>
</dbReference>
<dbReference type="PROSITE" id="PS00097">
    <property type="entry name" value="CARBAMOYLTRANSFERASE"/>
    <property type="match status" value="1"/>
</dbReference>
<comment type="function">
    <text evidence="1">Catalyzes the condensation of carbamoyl phosphate and aspartate to form carbamoyl aspartate and inorganic phosphate, the committed step in the de novo pyrimidine nucleotide biosynthesis pathway.</text>
</comment>
<comment type="catalytic activity">
    <reaction evidence="1">
        <text>carbamoyl phosphate + L-aspartate = N-carbamoyl-L-aspartate + phosphate + H(+)</text>
        <dbReference type="Rhea" id="RHEA:20013"/>
        <dbReference type="ChEBI" id="CHEBI:15378"/>
        <dbReference type="ChEBI" id="CHEBI:29991"/>
        <dbReference type="ChEBI" id="CHEBI:32814"/>
        <dbReference type="ChEBI" id="CHEBI:43474"/>
        <dbReference type="ChEBI" id="CHEBI:58228"/>
        <dbReference type="EC" id="2.1.3.2"/>
    </reaction>
</comment>
<comment type="pathway">
    <text evidence="1">Pyrimidine metabolism; UMP biosynthesis via de novo pathway; (S)-dihydroorotate from bicarbonate: step 2/3.</text>
</comment>
<comment type="subunit">
    <text evidence="1">Heterooligomer of catalytic and regulatory chains.</text>
</comment>
<comment type="similarity">
    <text evidence="1">Belongs to the aspartate/ornithine carbamoyltransferase superfamily. ATCase family.</text>
</comment>
<name>PYRB_THEGJ</name>
<sequence>MDWNGRDVISIRDFSKSDIEFVLKVAERLEEELREKGSLEYARGKILATLFFEPSTRTRLSFESAMHRLGGSVIGFSSASSTSVRKGESLADTIRTVEQYSDVIVIRHPMEGAARLAAEVAEVPVINAGDGSNQHPTQTLLDLYTIKRAFGKIDGLTIGLLGDLKYGRTVHSLAEALAFYDVELYLISPELLRMPKHIVEELRERGVKIHETTDLEGAIPELDVLYVTRIQRERFPDEEEYLKVKGSYQVNCKLLKNAKETLKVMHPLPRVDEIHPEVDKSEHALYFRQVFSGVPVRMALLGLTLGVL</sequence>
<proteinExistence type="inferred from homology"/>
<accession>C5A2H1</accession>
<protein>
    <recommendedName>
        <fullName evidence="1">Aspartate carbamoyltransferase catalytic subunit</fullName>
        <ecNumber evidence="1">2.1.3.2</ecNumber>
    </recommendedName>
    <alternativeName>
        <fullName evidence="1">Aspartate transcarbamylase</fullName>
        <shortName evidence="1">ATCase</shortName>
    </alternativeName>
</protein>
<reference key="1">
    <citation type="journal article" date="2007" name="Genome Biol.">
        <title>Genome analysis and genome-wide proteomics of Thermococcus gammatolerans, the most radioresistant organism known amongst the Archaea.</title>
        <authorList>
            <person name="Zivanovic Y."/>
            <person name="Armengaud J."/>
            <person name="Lagorce A."/>
            <person name="Leplat C."/>
            <person name="Guerin P."/>
            <person name="Dutertre M."/>
            <person name="Anthouard V."/>
            <person name="Forterre P."/>
            <person name="Wincker P."/>
            <person name="Confalonieri F."/>
        </authorList>
    </citation>
    <scope>NUCLEOTIDE SEQUENCE [LARGE SCALE GENOMIC DNA]</scope>
    <source>
        <strain>DSM 15229 / JCM 11827 / EJ3</strain>
    </source>
</reference>
<organism>
    <name type="scientific">Thermococcus gammatolerans (strain DSM 15229 / JCM 11827 / EJ3)</name>
    <dbReference type="NCBI Taxonomy" id="593117"/>
    <lineage>
        <taxon>Archaea</taxon>
        <taxon>Methanobacteriati</taxon>
        <taxon>Methanobacteriota</taxon>
        <taxon>Thermococci</taxon>
        <taxon>Thermococcales</taxon>
        <taxon>Thermococcaceae</taxon>
        <taxon>Thermococcus</taxon>
    </lineage>
</organism>